<organism>
    <name type="scientific">Lactococcus lactis subsp. lactis (strain IL1403)</name>
    <name type="common">Streptococcus lactis</name>
    <dbReference type="NCBI Taxonomy" id="272623"/>
    <lineage>
        <taxon>Bacteria</taxon>
        <taxon>Bacillati</taxon>
        <taxon>Bacillota</taxon>
        <taxon>Bacilli</taxon>
        <taxon>Lactobacillales</taxon>
        <taxon>Streptococcaceae</taxon>
        <taxon>Lactococcus</taxon>
    </lineage>
</organism>
<keyword id="KW-0521">NADP</keyword>
<keyword id="KW-0560">Oxidoreductase</keyword>
<keyword id="KW-1185">Reference proteome</keyword>
<sequence length="309" mass="35008">MKIGLVKTNFPGERRVPLLPKDIKDFKNEILVEEGFGKFLDIDDQEYIDKGCHILSRAEVFSESEAIFSLKLIQPTDYPYLREGQMIIGWTHPFGSGRLFMKEQALPKKLIVVDLDSNSPCIYYENEIFESGIPKGLLYKNSFYAGYAGVLDALLQYGFIPTEETKIAILGSGNVAQGAFSSISKYSSNIRMYYRKTMSIFKENYTKYDIIINGIEIGKEDDPILSFSEQKSLKKGTFIIDVAADAGNTIEGTHFTSMDDPIYENDGKYYYVVPNTPSLIYRNVSQDLSKILSENIFSEDCSRFLSIKS</sequence>
<feature type="chain" id="PRO_0000089482" description="N(5)-(carboxyethyl)ornithine synthase">
    <location>
        <begin position="1"/>
        <end position="309"/>
    </location>
</feature>
<feature type="binding site" evidence="1">
    <location>
        <position position="15"/>
    </location>
    <ligand>
        <name>pyruvate</name>
        <dbReference type="ChEBI" id="CHEBI:15361"/>
    </ligand>
</feature>
<feature type="binding site" evidence="1">
    <location>
        <position position="71"/>
    </location>
    <ligand>
        <name>pyruvate</name>
        <dbReference type="ChEBI" id="CHEBI:15361"/>
    </ligand>
</feature>
<feature type="binding site" evidence="1">
    <location>
        <position position="92"/>
    </location>
    <ligand>
        <name>pyruvate</name>
        <dbReference type="ChEBI" id="CHEBI:15361"/>
    </ligand>
</feature>
<feature type="binding site" evidence="2">
    <location>
        <begin position="171"/>
        <end position="176"/>
    </location>
    <ligand>
        <name>NADP(+)</name>
        <dbReference type="ChEBI" id="CHEBI:58349"/>
    </ligand>
</feature>
<reference key="1">
    <citation type="journal article" date="2001" name="Genome Res.">
        <title>The complete genome sequence of the lactic acid bacterium Lactococcus lactis ssp. lactis IL1403.</title>
        <authorList>
            <person name="Bolotin A."/>
            <person name="Wincker P."/>
            <person name="Mauger S."/>
            <person name="Jaillon O."/>
            <person name="Malarme K."/>
            <person name="Weissenbach J."/>
            <person name="Ehrlich S.D."/>
            <person name="Sorokin A."/>
        </authorList>
    </citation>
    <scope>NUCLEOTIDE SEQUENCE [LARGE SCALE GENOMIC DNA]</scope>
    <source>
        <strain>IL1403</strain>
    </source>
</reference>
<accession>Q9CG73</accession>
<protein>
    <recommendedName>
        <fullName>N(5)-(carboxyethyl)ornithine synthase</fullName>
        <shortName>CEOS</shortName>
        <ecNumber>1.5.1.24</ecNumber>
    </recommendedName>
    <alternativeName>
        <fullName>N(5)-(L-1-carboxyethyl)-L-ornithine:NADP(+) oxidoreductase</fullName>
    </alternativeName>
</protein>
<proteinExistence type="inferred from homology"/>
<dbReference type="EC" id="1.5.1.24"/>
<dbReference type="EMBL" id="AE005176">
    <property type="protein sequence ID" value="AAK05335.1"/>
    <property type="molecule type" value="Genomic_DNA"/>
</dbReference>
<dbReference type="PIR" id="E86779">
    <property type="entry name" value="E86779"/>
</dbReference>
<dbReference type="RefSeq" id="NP_267393.1">
    <property type="nucleotide sequence ID" value="NC_002662.1"/>
</dbReference>
<dbReference type="RefSeq" id="WP_003131029.1">
    <property type="nucleotide sequence ID" value="NC_002662.1"/>
</dbReference>
<dbReference type="SMR" id="Q9CG73"/>
<dbReference type="PaxDb" id="272623-L64332"/>
<dbReference type="EnsemblBacteria" id="AAK05335">
    <property type="protein sequence ID" value="AAK05335"/>
    <property type="gene ID" value="L64332"/>
</dbReference>
<dbReference type="KEGG" id="lla:L64332"/>
<dbReference type="PATRIC" id="fig|272623.7.peg.1338"/>
<dbReference type="eggNOG" id="COG0686">
    <property type="taxonomic scope" value="Bacteria"/>
</dbReference>
<dbReference type="HOGENOM" id="CLU_055768_0_0_9"/>
<dbReference type="OrthoDB" id="9804592at2"/>
<dbReference type="Proteomes" id="UP000002196">
    <property type="component" value="Chromosome"/>
</dbReference>
<dbReference type="GO" id="GO:0005886">
    <property type="term" value="C:plasma membrane"/>
    <property type="evidence" value="ECO:0007669"/>
    <property type="project" value="TreeGrafter"/>
</dbReference>
<dbReference type="GO" id="GO:0000286">
    <property type="term" value="F:alanine dehydrogenase activity"/>
    <property type="evidence" value="ECO:0007669"/>
    <property type="project" value="TreeGrafter"/>
</dbReference>
<dbReference type="GO" id="GO:0047126">
    <property type="term" value="F:N5-(carboxyethyl)ornithine synthase activity"/>
    <property type="evidence" value="ECO:0000250"/>
    <property type="project" value="UniProtKB"/>
</dbReference>
<dbReference type="GO" id="GO:0006524">
    <property type="term" value="P:alanine catabolic process"/>
    <property type="evidence" value="ECO:0007669"/>
    <property type="project" value="TreeGrafter"/>
</dbReference>
<dbReference type="CDD" id="cd12181">
    <property type="entry name" value="ceo_syn"/>
    <property type="match status" value="1"/>
</dbReference>
<dbReference type="FunFam" id="3.40.50.720:FF:000489">
    <property type="entry name" value="N(5)-(Carboxyethyl)ornithine synthase"/>
    <property type="match status" value="1"/>
</dbReference>
<dbReference type="FunFam" id="3.40.50.720:FF:000488">
    <property type="entry name" value="N5-(Carboxyethyl)ornithine synthase"/>
    <property type="match status" value="1"/>
</dbReference>
<dbReference type="Gene3D" id="3.40.50.720">
    <property type="entry name" value="NAD(P)-binding Rossmann-like Domain"/>
    <property type="match status" value="2"/>
</dbReference>
<dbReference type="InterPro" id="IPR007886">
    <property type="entry name" value="AlaDH/PNT_N"/>
</dbReference>
<dbReference type="InterPro" id="IPR007698">
    <property type="entry name" value="AlaDH/PNT_NAD(H)-bd"/>
</dbReference>
<dbReference type="InterPro" id="IPR046951">
    <property type="entry name" value="CEOS"/>
</dbReference>
<dbReference type="InterPro" id="IPR036291">
    <property type="entry name" value="NAD(P)-bd_dom_sf"/>
</dbReference>
<dbReference type="PANTHER" id="PTHR42795">
    <property type="entry name" value="ALANINE DEHYDROGENASE"/>
    <property type="match status" value="1"/>
</dbReference>
<dbReference type="PANTHER" id="PTHR42795:SF1">
    <property type="entry name" value="ALANINE DEHYDROGENASE"/>
    <property type="match status" value="1"/>
</dbReference>
<dbReference type="Pfam" id="PF01262">
    <property type="entry name" value="AlaDh_PNT_C"/>
    <property type="match status" value="1"/>
</dbReference>
<dbReference type="Pfam" id="PF05222">
    <property type="entry name" value="AlaDh_PNT_N"/>
    <property type="match status" value="1"/>
</dbReference>
<dbReference type="SMART" id="SM01002">
    <property type="entry name" value="AlaDh_PNT_C"/>
    <property type="match status" value="1"/>
</dbReference>
<dbReference type="SMART" id="SM01003">
    <property type="entry name" value="AlaDh_PNT_N"/>
    <property type="match status" value="1"/>
</dbReference>
<dbReference type="SUPFAM" id="SSF52283">
    <property type="entry name" value="Formate/glycerate dehydrogenase catalytic domain-like"/>
    <property type="match status" value="1"/>
</dbReference>
<dbReference type="SUPFAM" id="SSF51735">
    <property type="entry name" value="NAD(P)-binding Rossmann-fold domains"/>
    <property type="match status" value="1"/>
</dbReference>
<gene>
    <name type="primary">ceo</name>
    <name type="ordered locus">LL1237</name>
    <name type="ORF">L64332</name>
</gene>
<name>CEO1_LACLA</name>
<comment type="function">
    <text evidence="1">Catalyzes the NADPH-dependent reductive condensation between pyruvic acid and the side chain amino group of L-ornithine to form N(5)-(L-1-carboxyethyl)-L-ornithine. To a lesser extent, can also use L-lysine as substrate (yielding N(6)-(L-1-carboxyethyl)-L-lysine) (By similarity).</text>
</comment>
<comment type="catalytic activity">
    <reaction>
        <text>N(5)-[1(S)-1-carboxyethyl]-L-ornithine + NADP(+) + H2O = L-ornithine + pyruvate + NADPH + H(+)</text>
        <dbReference type="Rhea" id="RHEA:18661"/>
        <dbReference type="ChEBI" id="CHEBI:15361"/>
        <dbReference type="ChEBI" id="CHEBI:15377"/>
        <dbReference type="ChEBI" id="CHEBI:15378"/>
        <dbReference type="ChEBI" id="CHEBI:46911"/>
        <dbReference type="ChEBI" id="CHEBI:57783"/>
        <dbReference type="ChEBI" id="CHEBI:57889"/>
        <dbReference type="ChEBI" id="CHEBI:58349"/>
        <dbReference type="EC" id="1.5.1.24"/>
    </reaction>
</comment>
<comment type="subunit">
    <text evidence="1">Homotetramer.</text>
</comment>
<comment type="similarity">
    <text evidence="3">Belongs to the AlaDH/PNT family. CEOS subfamily.</text>
</comment>
<evidence type="ECO:0000250" key="1"/>
<evidence type="ECO:0000255" key="2"/>
<evidence type="ECO:0000305" key="3"/>